<proteinExistence type="inferred from homology"/>
<reference key="1">
    <citation type="journal article" date="2002" name="Nature">
        <title>Comparison of the genomes of two Xanthomonas pathogens with differing host specificities.</title>
        <authorList>
            <person name="da Silva A.C.R."/>
            <person name="Ferro J.A."/>
            <person name="Reinach F.C."/>
            <person name="Farah C.S."/>
            <person name="Furlan L.R."/>
            <person name="Quaggio R.B."/>
            <person name="Monteiro-Vitorello C.B."/>
            <person name="Van Sluys M.A."/>
            <person name="Almeida N.F. Jr."/>
            <person name="Alves L.M.C."/>
            <person name="do Amaral A.M."/>
            <person name="Bertolini M.C."/>
            <person name="Camargo L.E.A."/>
            <person name="Camarotte G."/>
            <person name="Cannavan F."/>
            <person name="Cardozo J."/>
            <person name="Chambergo F."/>
            <person name="Ciapina L.P."/>
            <person name="Cicarelli R.M.B."/>
            <person name="Coutinho L.L."/>
            <person name="Cursino-Santos J.R."/>
            <person name="El-Dorry H."/>
            <person name="Faria J.B."/>
            <person name="Ferreira A.J.S."/>
            <person name="Ferreira R.C.C."/>
            <person name="Ferro M.I.T."/>
            <person name="Formighieri E.F."/>
            <person name="Franco M.C."/>
            <person name="Greggio C.C."/>
            <person name="Gruber A."/>
            <person name="Katsuyama A.M."/>
            <person name="Kishi L.T."/>
            <person name="Leite R.P."/>
            <person name="Lemos E.G.M."/>
            <person name="Lemos M.V.F."/>
            <person name="Locali E.C."/>
            <person name="Machado M.A."/>
            <person name="Madeira A.M.B.N."/>
            <person name="Martinez-Rossi N.M."/>
            <person name="Martins E.C."/>
            <person name="Meidanis J."/>
            <person name="Menck C.F.M."/>
            <person name="Miyaki C.Y."/>
            <person name="Moon D.H."/>
            <person name="Moreira L.M."/>
            <person name="Novo M.T.M."/>
            <person name="Okura V.K."/>
            <person name="Oliveira M.C."/>
            <person name="Oliveira V.R."/>
            <person name="Pereira H.A."/>
            <person name="Rossi A."/>
            <person name="Sena J.A.D."/>
            <person name="Silva C."/>
            <person name="de Souza R.F."/>
            <person name="Spinola L.A.F."/>
            <person name="Takita M.A."/>
            <person name="Tamura R.E."/>
            <person name="Teixeira E.C."/>
            <person name="Tezza R.I.D."/>
            <person name="Trindade dos Santos M."/>
            <person name="Truffi D."/>
            <person name="Tsai S.M."/>
            <person name="White F.F."/>
            <person name="Setubal J.C."/>
            <person name="Kitajima J.P."/>
        </authorList>
    </citation>
    <scope>NUCLEOTIDE SEQUENCE [LARGE SCALE GENOMIC DNA]</scope>
    <source>
        <strain>306</strain>
    </source>
</reference>
<sequence length="861" mass="95575">MRMDKLTSRFQQALADAQSLAVGRDHNIIEPVHVLAALLDQSGGSTRPLLSQAGVNVPLLRERLGEALDTLPKVSGQEGNLSIGNDLNRLLNQTDKLAQQHGDAFIASEWFVLAAADDASPLGVALRAAGGDKKKIEAAIDKLRGGETVQSENAEEQRQALEKYTIDLTARAESGKLDPVIGRDEEIRRTIQVLQRRTKNNPVLIGEPGVGKTAIVEGLAQRIINGEVPEGLRGKRVLSLDMGALIAGAKFRGEFEERLKAVLSDLSKNEGQIILFIDELHTMVGAGKADGAMDAGNMLKPALARGELHCIGATTLDEYRKYIEKDAALERRFQKVFVGEPTVEDTIAILRGLKERYAVHHGVEITDPAIVAAATLSNRYITDRQLPDKAIDLMDEAASRIRMEIDSKPEELDRLERRLIQLKIQREMLKKEKDDASRQRLADLETDIDKLEREFYDLNELWKSEKAALQGTTKVKEQIEHAKLELEAAQRRQDYAKMSEIQYGVLPQLEKQMALANEVEHHDFKLVQDRVTAEEIAEVVSRWTGIPVNKMLEGERDKLLRMEDELHHRVVGQNEAIKVVSDAVRRSRAGLSDPNRPSGSFLFLGPTGVGKTELCKALADFLFDSTEAMIRIDMSEFMEKHSVARLIGAPPGYVGYEEGGYLTEAVRRRPYSLILLDEVEKAHPDVFNILLQVLDDGRLTDGQGRTVDFRNTVIVMTSNLGSHQIQELSGDDSAEAYTQMKAAVMGVVQAHFRPEFINRLDDIVVFHPLDKAQIKSIARIQLQGLEKRLAERGLKLDLDDAALEVLGSVGFDPVYGARPLKRAIQSQVENPLAQQILSGQYLSGDSVRVRADGGRLVFTKD</sequence>
<keyword id="KW-0067">ATP-binding</keyword>
<keyword id="KW-0143">Chaperone</keyword>
<keyword id="KW-0175">Coiled coil</keyword>
<keyword id="KW-0963">Cytoplasm</keyword>
<keyword id="KW-0547">Nucleotide-binding</keyword>
<keyword id="KW-0677">Repeat</keyword>
<keyword id="KW-0346">Stress response</keyword>
<accession>Q8PHQ4</accession>
<protein>
    <recommendedName>
        <fullName>Chaperone protein ClpB</fullName>
    </recommendedName>
</protein>
<name>CLPB_XANAC</name>
<dbReference type="EMBL" id="AE008923">
    <property type="protein sequence ID" value="AAM38039.1"/>
    <property type="status" value="ALT_INIT"/>
    <property type="molecule type" value="Genomic_DNA"/>
</dbReference>
<dbReference type="RefSeq" id="WP_015463505.1">
    <property type="nucleotide sequence ID" value="NC_003919.1"/>
</dbReference>
<dbReference type="SMR" id="Q8PHQ4"/>
<dbReference type="GeneID" id="66912259"/>
<dbReference type="KEGG" id="xac:XAC3195"/>
<dbReference type="eggNOG" id="COG0542">
    <property type="taxonomic scope" value="Bacteria"/>
</dbReference>
<dbReference type="HOGENOM" id="CLU_005070_4_2_6"/>
<dbReference type="Proteomes" id="UP000000576">
    <property type="component" value="Chromosome"/>
</dbReference>
<dbReference type="GO" id="GO:0005737">
    <property type="term" value="C:cytoplasm"/>
    <property type="evidence" value="ECO:0007669"/>
    <property type="project" value="UniProtKB-SubCell"/>
</dbReference>
<dbReference type="GO" id="GO:0005524">
    <property type="term" value="F:ATP binding"/>
    <property type="evidence" value="ECO:0007669"/>
    <property type="project" value="UniProtKB-KW"/>
</dbReference>
<dbReference type="GO" id="GO:0016887">
    <property type="term" value="F:ATP hydrolysis activity"/>
    <property type="evidence" value="ECO:0007669"/>
    <property type="project" value="InterPro"/>
</dbReference>
<dbReference type="GO" id="GO:0034605">
    <property type="term" value="P:cellular response to heat"/>
    <property type="evidence" value="ECO:0007669"/>
    <property type="project" value="TreeGrafter"/>
</dbReference>
<dbReference type="GO" id="GO:0042026">
    <property type="term" value="P:protein refolding"/>
    <property type="evidence" value="ECO:0007669"/>
    <property type="project" value="InterPro"/>
</dbReference>
<dbReference type="CDD" id="cd00009">
    <property type="entry name" value="AAA"/>
    <property type="match status" value="1"/>
</dbReference>
<dbReference type="CDD" id="cd19499">
    <property type="entry name" value="RecA-like_ClpB_Hsp104-like"/>
    <property type="match status" value="1"/>
</dbReference>
<dbReference type="FunFam" id="1.10.1780.10:FF:000003">
    <property type="entry name" value="ATP-dependent chaperone ClpB"/>
    <property type="match status" value="1"/>
</dbReference>
<dbReference type="FunFam" id="1.10.8.60:FF:000017">
    <property type="entry name" value="ATP-dependent chaperone ClpB"/>
    <property type="match status" value="1"/>
</dbReference>
<dbReference type="FunFam" id="3.40.50.300:FF:000120">
    <property type="entry name" value="ATP-dependent chaperone ClpB"/>
    <property type="match status" value="1"/>
</dbReference>
<dbReference type="FunFam" id="3.40.50.300:FF:000025">
    <property type="entry name" value="ATP-dependent Clp protease subunit"/>
    <property type="match status" value="1"/>
</dbReference>
<dbReference type="FunFam" id="3.40.50.300:FF:000010">
    <property type="entry name" value="Chaperone clpB 1, putative"/>
    <property type="match status" value="1"/>
</dbReference>
<dbReference type="Gene3D" id="1.10.8.60">
    <property type="match status" value="1"/>
</dbReference>
<dbReference type="Gene3D" id="1.10.1780.10">
    <property type="entry name" value="Clp, N-terminal domain"/>
    <property type="match status" value="1"/>
</dbReference>
<dbReference type="Gene3D" id="3.40.50.300">
    <property type="entry name" value="P-loop containing nucleotide triphosphate hydrolases"/>
    <property type="match status" value="3"/>
</dbReference>
<dbReference type="InterPro" id="IPR003593">
    <property type="entry name" value="AAA+_ATPase"/>
</dbReference>
<dbReference type="InterPro" id="IPR003959">
    <property type="entry name" value="ATPase_AAA_core"/>
</dbReference>
<dbReference type="InterPro" id="IPR017730">
    <property type="entry name" value="Chaperonin_ClpB"/>
</dbReference>
<dbReference type="InterPro" id="IPR019489">
    <property type="entry name" value="Clp_ATPase_C"/>
</dbReference>
<dbReference type="InterPro" id="IPR036628">
    <property type="entry name" value="Clp_N_dom_sf"/>
</dbReference>
<dbReference type="InterPro" id="IPR004176">
    <property type="entry name" value="Clp_R_dom"/>
</dbReference>
<dbReference type="InterPro" id="IPR001270">
    <property type="entry name" value="ClpA/B"/>
</dbReference>
<dbReference type="InterPro" id="IPR018368">
    <property type="entry name" value="ClpA/B_CS1"/>
</dbReference>
<dbReference type="InterPro" id="IPR028299">
    <property type="entry name" value="ClpA/B_CS2"/>
</dbReference>
<dbReference type="InterPro" id="IPR041546">
    <property type="entry name" value="ClpA/ClpB_AAA_lid"/>
</dbReference>
<dbReference type="InterPro" id="IPR050130">
    <property type="entry name" value="ClpA_ClpB"/>
</dbReference>
<dbReference type="InterPro" id="IPR027417">
    <property type="entry name" value="P-loop_NTPase"/>
</dbReference>
<dbReference type="NCBIfam" id="TIGR03346">
    <property type="entry name" value="chaperone_ClpB"/>
    <property type="match status" value="1"/>
</dbReference>
<dbReference type="NCBIfam" id="NF008118">
    <property type="entry name" value="PRK10865.1"/>
    <property type="match status" value="1"/>
</dbReference>
<dbReference type="PANTHER" id="PTHR11638">
    <property type="entry name" value="ATP-DEPENDENT CLP PROTEASE"/>
    <property type="match status" value="1"/>
</dbReference>
<dbReference type="PANTHER" id="PTHR11638:SF18">
    <property type="entry name" value="HEAT SHOCK PROTEIN 104"/>
    <property type="match status" value="1"/>
</dbReference>
<dbReference type="Pfam" id="PF00004">
    <property type="entry name" value="AAA"/>
    <property type="match status" value="1"/>
</dbReference>
<dbReference type="Pfam" id="PF07724">
    <property type="entry name" value="AAA_2"/>
    <property type="match status" value="1"/>
</dbReference>
<dbReference type="Pfam" id="PF17871">
    <property type="entry name" value="AAA_lid_9"/>
    <property type="match status" value="1"/>
</dbReference>
<dbReference type="Pfam" id="PF02861">
    <property type="entry name" value="Clp_N"/>
    <property type="match status" value="2"/>
</dbReference>
<dbReference type="Pfam" id="PF10431">
    <property type="entry name" value="ClpB_D2-small"/>
    <property type="match status" value="1"/>
</dbReference>
<dbReference type="PRINTS" id="PR00300">
    <property type="entry name" value="CLPPROTEASEA"/>
</dbReference>
<dbReference type="SMART" id="SM00382">
    <property type="entry name" value="AAA"/>
    <property type="match status" value="2"/>
</dbReference>
<dbReference type="SMART" id="SM01086">
    <property type="entry name" value="ClpB_D2-small"/>
    <property type="match status" value="1"/>
</dbReference>
<dbReference type="SUPFAM" id="SSF81923">
    <property type="entry name" value="Double Clp-N motif"/>
    <property type="match status" value="1"/>
</dbReference>
<dbReference type="SUPFAM" id="SSF52540">
    <property type="entry name" value="P-loop containing nucleoside triphosphate hydrolases"/>
    <property type="match status" value="2"/>
</dbReference>
<dbReference type="PROSITE" id="PS51903">
    <property type="entry name" value="CLP_R"/>
    <property type="match status" value="1"/>
</dbReference>
<dbReference type="PROSITE" id="PS00870">
    <property type="entry name" value="CLPAB_1"/>
    <property type="match status" value="1"/>
</dbReference>
<dbReference type="PROSITE" id="PS00871">
    <property type="entry name" value="CLPAB_2"/>
    <property type="match status" value="1"/>
</dbReference>
<organism>
    <name type="scientific">Xanthomonas axonopodis pv. citri (strain 306)</name>
    <dbReference type="NCBI Taxonomy" id="190486"/>
    <lineage>
        <taxon>Bacteria</taxon>
        <taxon>Pseudomonadati</taxon>
        <taxon>Pseudomonadota</taxon>
        <taxon>Gammaproteobacteria</taxon>
        <taxon>Lysobacterales</taxon>
        <taxon>Lysobacteraceae</taxon>
        <taxon>Xanthomonas</taxon>
    </lineage>
</organism>
<gene>
    <name type="primary">clpB</name>
    <name type="ordered locus">XAC3195</name>
</gene>
<evidence type="ECO:0000250" key="1"/>
<evidence type="ECO:0000255" key="2">
    <source>
        <dbReference type="PROSITE-ProRule" id="PRU01251"/>
    </source>
</evidence>
<evidence type="ECO:0000305" key="3"/>
<feature type="chain" id="PRO_0000191206" description="Chaperone protein ClpB">
    <location>
        <begin position="1"/>
        <end position="861"/>
    </location>
</feature>
<feature type="domain" description="Clp R" evidence="2">
    <location>
        <begin position="3"/>
        <end position="146"/>
    </location>
</feature>
<feature type="region of interest" description="Repeat 1" evidence="2">
    <location>
        <begin position="6"/>
        <end position="71"/>
    </location>
</feature>
<feature type="region of interest" description="Repeat 2" evidence="2">
    <location>
        <begin position="83"/>
        <end position="146"/>
    </location>
</feature>
<feature type="region of interest" description="NBD1" evidence="1">
    <location>
        <begin position="159"/>
        <end position="340"/>
    </location>
</feature>
<feature type="region of interest" description="Linker" evidence="1">
    <location>
        <begin position="341"/>
        <end position="545"/>
    </location>
</feature>
<feature type="region of interest" description="NBD2" evidence="1">
    <location>
        <begin position="555"/>
        <end position="768"/>
    </location>
</feature>
<feature type="region of interest" description="C-terminal" evidence="1">
    <location>
        <begin position="769"/>
        <end position="861"/>
    </location>
</feature>
<feature type="coiled-coil region" evidence="1">
    <location>
        <begin position="391"/>
        <end position="523"/>
    </location>
</feature>
<feature type="binding site" evidence="1">
    <location>
        <begin position="206"/>
        <end position="213"/>
    </location>
    <ligand>
        <name>ATP</name>
        <dbReference type="ChEBI" id="CHEBI:30616"/>
        <label>1</label>
    </ligand>
</feature>
<feature type="binding site" evidence="1">
    <location>
        <begin position="605"/>
        <end position="612"/>
    </location>
    <ligand>
        <name>ATP</name>
        <dbReference type="ChEBI" id="CHEBI:30616"/>
        <label>2</label>
    </ligand>
</feature>
<comment type="function">
    <text evidence="1">Part of a stress-induced multi-chaperone system, it is involved in the recovery of the cell from heat-induced damage, in cooperation with DnaK, DnaJ and GrpE. Acts before DnaK, in the processing of protein aggregates. Protein binding stimulates the ATPase activity; ATP hydrolysis unfolds the denatured protein aggregates, which probably helps expose new hydrophobic binding sites on the surface of ClpB-bound aggregates, contributing to the solubilization and refolding of denatured protein aggregates by DnaK (By similarity).</text>
</comment>
<comment type="subunit">
    <text evidence="1">Homohexamer. The oligomerization is ATP-dependent (By similarity).</text>
</comment>
<comment type="subcellular location">
    <subcellularLocation>
        <location evidence="3">Cytoplasm</location>
    </subcellularLocation>
</comment>
<comment type="domain">
    <text evidence="1">The Clp repeat (R) domain probably functions as a substrate-discriminating domain, recruiting aggregated proteins to the ClpB hexamer and/or stabilizing bound proteins. The NBD2 domain is responsible for oligomerization, whereas the NBD1 domain stabilizes the hexamer probably in an ATP-dependent manner. The movement of the coiled-coil domain is essential for ClpB ability to rescue proteins from an aggregated state, probably by pulling apart large aggregated proteins, which are bound between the coiled-coils motifs of adjacent ClpB subunits in the functional hexamer (By similarity).</text>
</comment>
<comment type="similarity">
    <text evidence="3">Belongs to the ClpA/ClpB family.</text>
</comment>
<comment type="sequence caution" evidence="3">
    <conflict type="erroneous initiation">
        <sequence resource="EMBL-CDS" id="AAM38039"/>
    </conflict>
</comment>